<keyword id="KW-0997">Cell inner membrane</keyword>
<keyword id="KW-1003">Cell membrane</keyword>
<keyword id="KW-0472">Membrane</keyword>
<keyword id="KW-0812">Transmembrane</keyword>
<keyword id="KW-1133">Transmembrane helix</keyword>
<sequence length="288" mass="32319">MSNLCRNIKVFFKVFLYRFKQNKLNQAAGYLTYSTTLALVPLIMVFFSVFAAFPVFNEITGELKQFIFTNFAPSTGDAVGEYIDQFVNNSKQMSAVGIISLIVVALMLIHSIDRTLNSIWLDTSVRPAIFSFAIYWLILTLGPIVIATSIGISTYVTKFATYTFEQDLGLSVGIKLLSLMPFFLTWFIFTVLYMVVPNKKVSIIHSAAGALIAAVFFTLGKQAFTWYITTFPSYQLIYGAMATLPIMLLWIQLSWTAVLLGAQLSAVLADMRSLDDSNIQIEKMKEEK</sequence>
<proteinExistence type="inferred from homology"/>
<comment type="subcellular location">
    <subcellularLocation>
        <location evidence="1">Cell inner membrane</location>
        <topology evidence="1">Multi-pass membrane protein</topology>
    </subcellularLocation>
</comment>
<comment type="similarity">
    <text evidence="1">Belongs to the UPF0761 family.</text>
</comment>
<gene>
    <name type="ordered locus">HSM_1104</name>
</gene>
<organism>
    <name type="scientific">Histophilus somni (strain 2336)</name>
    <name type="common">Haemophilus somnus</name>
    <dbReference type="NCBI Taxonomy" id="228400"/>
    <lineage>
        <taxon>Bacteria</taxon>
        <taxon>Pseudomonadati</taxon>
        <taxon>Pseudomonadota</taxon>
        <taxon>Gammaproteobacteria</taxon>
        <taxon>Pasteurellales</taxon>
        <taxon>Pasteurellaceae</taxon>
        <taxon>Histophilus</taxon>
    </lineage>
</organism>
<feature type="chain" id="PRO_1000131555" description="UPF0761 membrane protein HSM_1104">
    <location>
        <begin position="1"/>
        <end position="288"/>
    </location>
</feature>
<feature type="transmembrane region" description="Helical" evidence="1">
    <location>
        <begin position="36"/>
        <end position="56"/>
    </location>
</feature>
<feature type="transmembrane region" description="Helical" evidence="1">
    <location>
        <begin position="92"/>
        <end position="112"/>
    </location>
</feature>
<feature type="transmembrane region" description="Helical" evidence="1">
    <location>
        <begin position="127"/>
        <end position="147"/>
    </location>
</feature>
<feature type="transmembrane region" description="Helical" evidence="1">
    <location>
        <begin position="176"/>
        <end position="196"/>
    </location>
</feature>
<feature type="transmembrane region" description="Helical" evidence="1">
    <location>
        <begin position="200"/>
        <end position="220"/>
    </location>
</feature>
<feature type="transmembrane region" description="Helical" evidence="1">
    <location>
        <begin position="240"/>
        <end position="260"/>
    </location>
</feature>
<reference key="1">
    <citation type="submission" date="2008-02" db="EMBL/GenBank/DDBJ databases">
        <title>Complete sequence of Haemophilus somnus 2336.</title>
        <authorList>
            <consortium name="US DOE Joint Genome Institute"/>
            <person name="Siddaramappa S."/>
            <person name="Duncan A.J."/>
            <person name="Challacombe J.F."/>
            <person name="Rainey D."/>
            <person name="Gillaspy A.F."/>
            <person name="Carson M."/>
            <person name="Gipson J."/>
            <person name="Gipson M."/>
            <person name="Bruce D."/>
            <person name="Detter J.C."/>
            <person name="Han C.S."/>
            <person name="Land M."/>
            <person name="Tapia R."/>
            <person name="Thompson L.S."/>
            <person name="Orvis J."/>
            <person name="Zaitshik J."/>
            <person name="Barnes G."/>
            <person name="Brettin T.S."/>
            <person name="Dyer D.W."/>
            <person name="Inzana T.J."/>
        </authorList>
    </citation>
    <scope>NUCLEOTIDE SEQUENCE [LARGE SCALE GENOMIC DNA]</scope>
    <source>
        <strain>2336</strain>
    </source>
</reference>
<evidence type="ECO:0000255" key="1">
    <source>
        <dbReference type="HAMAP-Rule" id="MF_00672"/>
    </source>
</evidence>
<accession>B0UTI5</accession>
<protein>
    <recommendedName>
        <fullName evidence="1">UPF0761 membrane protein HSM_1104</fullName>
    </recommendedName>
</protein>
<name>Y1104_HISS2</name>
<dbReference type="EMBL" id="CP000947">
    <property type="protein sequence ID" value="ACA30823.1"/>
    <property type="molecule type" value="Genomic_DNA"/>
</dbReference>
<dbReference type="RefSeq" id="WP_012340288.1">
    <property type="nucleotide sequence ID" value="NC_010519.1"/>
</dbReference>
<dbReference type="GeneID" id="31487404"/>
<dbReference type="KEGG" id="hsm:HSM_1104"/>
<dbReference type="HOGENOM" id="CLU_032288_0_0_6"/>
<dbReference type="GO" id="GO:0005886">
    <property type="term" value="C:plasma membrane"/>
    <property type="evidence" value="ECO:0007669"/>
    <property type="project" value="UniProtKB-SubCell"/>
</dbReference>
<dbReference type="HAMAP" id="MF_00672">
    <property type="entry name" value="UPF0761"/>
    <property type="match status" value="1"/>
</dbReference>
<dbReference type="InterPro" id="IPR023679">
    <property type="entry name" value="UPF0761_bac"/>
</dbReference>
<dbReference type="InterPro" id="IPR017039">
    <property type="entry name" value="Virul_fac_BrkB"/>
</dbReference>
<dbReference type="NCBIfam" id="NF002457">
    <property type="entry name" value="PRK01637.1"/>
    <property type="match status" value="1"/>
</dbReference>
<dbReference type="NCBIfam" id="TIGR00765">
    <property type="entry name" value="yihY_not_rbn"/>
    <property type="match status" value="1"/>
</dbReference>
<dbReference type="PANTHER" id="PTHR30213">
    <property type="entry name" value="INNER MEMBRANE PROTEIN YHJD"/>
    <property type="match status" value="1"/>
</dbReference>
<dbReference type="PANTHER" id="PTHR30213:SF0">
    <property type="entry name" value="UPF0761 MEMBRANE PROTEIN YIHY"/>
    <property type="match status" value="1"/>
</dbReference>
<dbReference type="Pfam" id="PF03631">
    <property type="entry name" value="Virul_fac_BrkB"/>
    <property type="match status" value="1"/>
</dbReference>
<dbReference type="PIRSF" id="PIRSF035875">
    <property type="entry name" value="RNase_BN"/>
    <property type="match status" value="1"/>
</dbReference>